<reference key="1">
    <citation type="journal article" date="2005" name="BMC Genomics">
        <title>Characterization of 954 bovine full-CDS cDNA sequences.</title>
        <authorList>
            <person name="Harhay G.P."/>
            <person name="Sonstegard T.S."/>
            <person name="Keele J.W."/>
            <person name="Heaton M.P."/>
            <person name="Clawson M.L."/>
            <person name="Snelling W.M."/>
            <person name="Wiedmann R.T."/>
            <person name="Van Tassell C.P."/>
            <person name="Smith T.P.L."/>
        </authorList>
    </citation>
    <scope>NUCLEOTIDE SEQUENCE [LARGE SCALE MRNA]</scope>
</reference>
<reference key="2">
    <citation type="submission" date="2005-08" db="EMBL/GenBank/DDBJ databases">
        <authorList>
            <consortium name="NIH - Mammalian Gene Collection (MGC) project"/>
        </authorList>
    </citation>
    <scope>NUCLEOTIDE SEQUENCE [LARGE SCALE MRNA]</scope>
    <source>
        <strain>Hereford</strain>
        <tissue>Fetal liver</tissue>
    </source>
</reference>
<evidence type="ECO:0000250" key="1">
    <source>
        <dbReference type="UniProtKB" id="Q13133"/>
    </source>
</evidence>
<evidence type="ECO:0000250" key="2">
    <source>
        <dbReference type="UniProtKB" id="Q9Z0Y9"/>
    </source>
</evidence>
<evidence type="ECO:0000255" key="3">
    <source>
        <dbReference type="PROSITE-ProRule" id="PRU00407"/>
    </source>
</evidence>
<evidence type="ECO:0000255" key="4">
    <source>
        <dbReference type="PROSITE-ProRule" id="PRU01189"/>
    </source>
</evidence>
<evidence type="ECO:0000256" key="5">
    <source>
        <dbReference type="SAM" id="MobiDB-lite"/>
    </source>
</evidence>
<evidence type="ECO:0000305" key="6"/>
<dbReference type="EMBL" id="BT021004">
    <property type="protein sequence ID" value="AAX09021.1"/>
    <property type="molecule type" value="mRNA"/>
</dbReference>
<dbReference type="EMBL" id="BC103207">
    <property type="protein sequence ID" value="AAI03208.1"/>
    <property type="molecule type" value="mRNA"/>
</dbReference>
<dbReference type="RefSeq" id="NP_001014861.1">
    <property type="nucleotide sequence ID" value="NM_001014861.1"/>
</dbReference>
<dbReference type="RefSeq" id="XP_024830871.1">
    <property type="nucleotide sequence ID" value="XM_024975103.2"/>
</dbReference>
<dbReference type="SMR" id="Q5E9B6"/>
<dbReference type="FunCoup" id="Q5E9B6">
    <property type="interactions" value="773"/>
</dbReference>
<dbReference type="STRING" id="9913.ENSBTAP00000060937"/>
<dbReference type="PaxDb" id="9913-ENSBTAP00000014131"/>
<dbReference type="Ensembl" id="ENSBTAT00000014131.5">
    <property type="protein sequence ID" value="ENSBTAP00000014131.3"/>
    <property type="gene ID" value="ENSBTAG00000010681.5"/>
</dbReference>
<dbReference type="GeneID" id="507176"/>
<dbReference type="KEGG" id="bta:507176"/>
<dbReference type="CTD" id="10062"/>
<dbReference type="VEuPathDB" id="HostDB:ENSBTAG00000010681"/>
<dbReference type="VGNC" id="VGNC:32231">
    <property type="gene designation" value="NR1H3"/>
</dbReference>
<dbReference type="eggNOG" id="KOG3575">
    <property type="taxonomic scope" value="Eukaryota"/>
</dbReference>
<dbReference type="GeneTree" id="ENSGT00940000159068"/>
<dbReference type="HOGENOM" id="CLU_007368_12_4_1"/>
<dbReference type="InParanoid" id="Q5E9B6"/>
<dbReference type="OMA" id="PETTCAI"/>
<dbReference type="OrthoDB" id="5837785at2759"/>
<dbReference type="TreeFam" id="TF352167"/>
<dbReference type="Reactome" id="R-BTA-383280">
    <property type="pathway name" value="Nuclear Receptor transcription pathway"/>
</dbReference>
<dbReference type="Reactome" id="R-BTA-4090294">
    <property type="pathway name" value="SUMOylation of intracellular receptors"/>
</dbReference>
<dbReference type="Reactome" id="R-BTA-8866427">
    <property type="pathway name" value="VLDLR internalisation and degradation"/>
</dbReference>
<dbReference type="Reactome" id="R-BTA-9029569">
    <property type="pathway name" value="NR1H3 &amp; NR1H2 regulate gene expression linked to cholesterol transport and efflux"/>
</dbReference>
<dbReference type="Reactome" id="R-BTA-9623433">
    <property type="pathway name" value="NR1H2 &amp; NR1H3 regulate gene expression to control bile acid homeostasis"/>
</dbReference>
<dbReference type="Proteomes" id="UP000009136">
    <property type="component" value="Chromosome 15"/>
</dbReference>
<dbReference type="Bgee" id="ENSBTAG00000010681">
    <property type="expression patterns" value="Expressed in lung and 104 other cell types or tissues"/>
</dbReference>
<dbReference type="GO" id="GO:0000785">
    <property type="term" value="C:chromatin"/>
    <property type="evidence" value="ECO:0007669"/>
    <property type="project" value="Ensembl"/>
</dbReference>
<dbReference type="GO" id="GO:0005737">
    <property type="term" value="C:cytoplasm"/>
    <property type="evidence" value="ECO:0000250"/>
    <property type="project" value="UniProtKB"/>
</dbReference>
<dbReference type="GO" id="GO:0005829">
    <property type="term" value="C:cytosol"/>
    <property type="evidence" value="ECO:0007669"/>
    <property type="project" value="Ensembl"/>
</dbReference>
<dbReference type="GO" id="GO:0005654">
    <property type="term" value="C:nucleoplasm"/>
    <property type="evidence" value="ECO:0007669"/>
    <property type="project" value="Ensembl"/>
</dbReference>
<dbReference type="GO" id="GO:0005634">
    <property type="term" value="C:nucleus"/>
    <property type="evidence" value="ECO:0000250"/>
    <property type="project" value="UniProtKB"/>
</dbReference>
<dbReference type="GO" id="GO:0043235">
    <property type="term" value="C:receptor complex"/>
    <property type="evidence" value="ECO:0007669"/>
    <property type="project" value="Ensembl"/>
</dbReference>
<dbReference type="GO" id="GO:0090575">
    <property type="term" value="C:RNA polymerase II transcription regulator complex"/>
    <property type="evidence" value="ECO:0000318"/>
    <property type="project" value="GO_Central"/>
</dbReference>
<dbReference type="GO" id="GO:0031490">
    <property type="term" value="F:chromatin DNA binding"/>
    <property type="evidence" value="ECO:0007669"/>
    <property type="project" value="Ensembl"/>
</dbReference>
<dbReference type="GO" id="GO:0001228">
    <property type="term" value="F:DNA-binding transcription activator activity, RNA polymerase II-specific"/>
    <property type="evidence" value="ECO:0007669"/>
    <property type="project" value="Ensembl"/>
</dbReference>
<dbReference type="GO" id="GO:0004879">
    <property type="term" value="F:nuclear receptor activity"/>
    <property type="evidence" value="ECO:0000250"/>
    <property type="project" value="UniProtKB"/>
</dbReference>
<dbReference type="GO" id="GO:0046965">
    <property type="term" value="F:nuclear retinoid X receptor binding"/>
    <property type="evidence" value="ECO:0000250"/>
    <property type="project" value="AgBase"/>
</dbReference>
<dbReference type="GO" id="GO:0000978">
    <property type="term" value="F:RNA polymerase II cis-regulatory region sequence-specific DNA binding"/>
    <property type="evidence" value="ECO:0000318"/>
    <property type="project" value="GO_Central"/>
</dbReference>
<dbReference type="GO" id="GO:0043565">
    <property type="term" value="F:sequence-specific DNA binding"/>
    <property type="evidence" value="ECO:0000250"/>
    <property type="project" value="AgBase"/>
</dbReference>
<dbReference type="GO" id="GO:0032810">
    <property type="term" value="F:sterol response element binding"/>
    <property type="evidence" value="ECO:0007669"/>
    <property type="project" value="Ensembl"/>
</dbReference>
<dbReference type="GO" id="GO:0008270">
    <property type="term" value="F:zinc ion binding"/>
    <property type="evidence" value="ECO:0007669"/>
    <property type="project" value="UniProtKB-KW"/>
</dbReference>
<dbReference type="GO" id="GO:0043277">
    <property type="term" value="P:apoptotic cell clearance"/>
    <property type="evidence" value="ECO:0007669"/>
    <property type="project" value="Ensembl"/>
</dbReference>
<dbReference type="GO" id="GO:0030154">
    <property type="term" value="P:cell differentiation"/>
    <property type="evidence" value="ECO:0000318"/>
    <property type="project" value="GO_Central"/>
</dbReference>
<dbReference type="GO" id="GO:0071222">
    <property type="term" value="P:cellular response to lipopolysaccharide"/>
    <property type="evidence" value="ECO:0007669"/>
    <property type="project" value="Ensembl"/>
</dbReference>
<dbReference type="GO" id="GO:0042632">
    <property type="term" value="P:cholesterol homeostasis"/>
    <property type="evidence" value="ECO:0000250"/>
    <property type="project" value="UniProtKB"/>
</dbReference>
<dbReference type="GO" id="GO:0009755">
    <property type="term" value="P:hormone-mediated signaling pathway"/>
    <property type="evidence" value="ECO:0007669"/>
    <property type="project" value="Ensembl"/>
</dbReference>
<dbReference type="GO" id="GO:0030522">
    <property type="term" value="P:intracellular receptor signaling pathway"/>
    <property type="evidence" value="ECO:0000318"/>
    <property type="project" value="GO_Central"/>
</dbReference>
<dbReference type="GO" id="GO:0042789">
    <property type="term" value="P:mRNA transcription by RNA polymerase II"/>
    <property type="evidence" value="ECO:0007669"/>
    <property type="project" value="Ensembl"/>
</dbReference>
<dbReference type="GO" id="GO:0010887">
    <property type="term" value="P:negative regulation of cholesterol storage"/>
    <property type="evidence" value="ECO:0007669"/>
    <property type="project" value="Ensembl"/>
</dbReference>
<dbReference type="GO" id="GO:0120163">
    <property type="term" value="P:negative regulation of cold-induced thermogenesis"/>
    <property type="evidence" value="ECO:0007669"/>
    <property type="project" value="Ensembl"/>
</dbReference>
<dbReference type="GO" id="GO:0050728">
    <property type="term" value="P:negative regulation of inflammatory response"/>
    <property type="evidence" value="ECO:0000318"/>
    <property type="project" value="GO_Central"/>
</dbReference>
<dbReference type="GO" id="GO:0032369">
    <property type="term" value="P:negative regulation of lipid transport"/>
    <property type="evidence" value="ECO:0007669"/>
    <property type="project" value="Ensembl"/>
</dbReference>
<dbReference type="GO" id="GO:0043031">
    <property type="term" value="P:negative regulation of macrophage activation"/>
    <property type="evidence" value="ECO:0007669"/>
    <property type="project" value="Ensembl"/>
</dbReference>
<dbReference type="GO" id="GO:0090188">
    <property type="term" value="P:negative regulation of pancreatic juice secretion"/>
    <property type="evidence" value="ECO:0007669"/>
    <property type="project" value="Ensembl"/>
</dbReference>
<dbReference type="GO" id="GO:0048550">
    <property type="term" value="P:negative regulation of pinocytosis"/>
    <property type="evidence" value="ECO:0007669"/>
    <property type="project" value="Ensembl"/>
</dbReference>
<dbReference type="GO" id="GO:0045861">
    <property type="term" value="P:negative regulation of proteolysis"/>
    <property type="evidence" value="ECO:0007669"/>
    <property type="project" value="Ensembl"/>
</dbReference>
<dbReference type="GO" id="GO:1903573">
    <property type="term" value="P:negative regulation of response to endoplasmic reticulum stress"/>
    <property type="evidence" value="ECO:0000250"/>
    <property type="project" value="UniProtKB"/>
</dbReference>
<dbReference type="GO" id="GO:0090341">
    <property type="term" value="P:negative regulation of secretion of lysosomal enzymes"/>
    <property type="evidence" value="ECO:0007669"/>
    <property type="project" value="Ensembl"/>
</dbReference>
<dbReference type="GO" id="GO:0000122">
    <property type="term" value="P:negative regulation of transcription by RNA polymerase II"/>
    <property type="evidence" value="ECO:0000318"/>
    <property type="project" value="GO_Central"/>
</dbReference>
<dbReference type="GO" id="GO:0036151">
    <property type="term" value="P:phosphatidylcholine acyl-chain remodeling"/>
    <property type="evidence" value="ECO:0000250"/>
    <property type="project" value="UniProtKB"/>
</dbReference>
<dbReference type="GO" id="GO:0010875">
    <property type="term" value="P:positive regulation of cholesterol efflux"/>
    <property type="evidence" value="ECO:0000250"/>
    <property type="project" value="UniProtKB"/>
</dbReference>
<dbReference type="GO" id="GO:0045893">
    <property type="term" value="P:positive regulation of DNA-templated transcription"/>
    <property type="evidence" value="ECO:0000250"/>
    <property type="project" value="UniProtKB"/>
</dbReference>
<dbReference type="GO" id="GO:0045723">
    <property type="term" value="P:positive regulation of fatty acid biosynthetic process"/>
    <property type="evidence" value="ECO:0007669"/>
    <property type="project" value="Ensembl"/>
</dbReference>
<dbReference type="GO" id="GO:0034145">
    <property type="term" value="P:positive regulation of toll-like receptor 4 signaling pathway"/>
    <property type="evidence" value="ECO:0007669"/>
    <property type="project" value="Ensembl"/>
</dbReference>
<dbReference type="GO" id="GO:0045944">
    <property type="term" value="P:positive regulation of transcription by RNA polymerase II"/>
    <property type="evidence" value="ECO:0000250"/>
    <property type="project" value="UniProtKB"/>
</dbReference>
<dbReference type="GO" id="GO:0010867">
    <property type="term" value="P:positive regulation of triglyceride biosynthetic process"/>
    <property type="evidence" value="ECO:0007669"/>
    <property type="project" value="Ensembl"/>
</dbReference>
<dbReference type="GO" id="GO:0010883">
    <property type="term" value="P:regulation of lipid storage"/>
    <property type="evidence" value="ECO:0000318"/>
    <property type="project" value="GO_Central"/>
</dbReference>
<dbReference type="GO" id="GO:0032570">
    <property type="term" value="P:response to progesterone"/>
    <property type="evidence" value="ECO:0007669"/>
    <property type="project" value="Ensembl"/>
</dbReference>
<dbReference type="GO" id="GO:0070328">
    <property type="term" value="P:triglyceride homeostasis"/>
    <property type="evidence" value="ECO:0007669"/>
    <property type="project" value="Ensembl"/>
</dbReference>
<dbReference type="CDD" id="cd07160">
    <property type="entry name" value="NR_DBD_LXR"/>
    <property type="match status" value="1"/>
</dbReference>
<dbReference type="CDD" id="cd06954">
    <property type="entry name" value="NR_LBD_LXR"/>
    <property type="match status" value="1"/>
</dbReference>
<dbReference type="FunFam" id="1.10.565.10:FF:000014">
    <property type="entry name" value="Oxysterols receptor LXR-alpha isoform 1"/>
    <property type="match status" value="1"/>
</dbReference>
<dbReference type="FunFam" id="3.30.50.10:FF:000017">
    <property type="entry name" value="Oxysterols receptor LXR-alpha isoform 1"/>
    <property type="match status" value="1"/>
</dbReference>
<dbReference type="Gene3D" id="3.30.50.10">
    <property type="entry name" value="Erythroid Transcription Factor GATA-1, subunit A"/>
    <property type="match status" value="1"/>
</dbReference>
<dbReference type="Gene3D" id="1.10.565.10">
    <property type="entry name" value="Retinoid X Receptor"/>
    <property type="match status" value="1"/>
</dbReference>
<dbReference type="InterPro" id="IPR023257">
    <property type="entry name" value="Liver_X_rcpt"/>
</dbReference>
<dbReference type="InterPro" id="IPR035500">
    <property type="entry name" value="NHR-like_dom_sf"/>
</dbReference>
<dbReference type="InterPro" id="IPR000536">
    <property type="entry name" value="Nucl_hrmn_rcpt_lig-bd"/>
</dbReference>
<dbReference type="InterPro" id="IPR050234">
    <property type="entry name" value="Nuclear_hormone_rcpt_NR1"/>
</dbReference>
<dbReference type="InterPro" id="IPR001723">
    <property type="entry name" value="Nuclear_hrmn_rcpt"/>
</dbReference>
<dbReference type="InterPro" id="IPR001628">
    <property type="entry name" value="Znf_hrmn_rcpt"/>
</dbReference>
<dbReference type="InterPro" id="IPR013088">
    <property type="entry name" value="Znf_NHR/GATA"/>
</dbReference>
<dbReference type="PANTHER" id="PTHR24082">
    <property type="entry name" value="NUCLEAR HORMONE RECEPTOR"/>
    <property type="match status" value="1"/>
</dbReference>
<dbReference type="PANTHER" id="PTHR24082:SF259">
    <property type="entry name" value="OXYSTEROLS RECEPTOR LXR-ALPHA"/>
    <property type="match status" value="1"/>
</dbReference>
<dbReference type="Pfam" id="PF00104">
    <property type="entry name" value="Hormone_recep"/>
    <property type="match status" value="1"/>
</dbReference>
<dbReference type="Pfam" id="PF00105">
    <property type="entry name" value="zf-C4"/>
    <property type="match status" value="1"/>
</dbReference>
<dbReference type="PRINTS" id="PR02034">
    <property type="entry name" value="LIVERXRECPTR"/>
</dbReference>
<dbReference type="PRINTS" id="PR00398">
    <property type="entry name" value="STRDHORMONER"/>
</dbReference>
<dbReference type="PRINTS" id="PR00047">
    <property type="entry name" value="STROIDFINGER"/>
</dbReference>
<dbReference type="SMART" id="SM00430">
    <property type="entry name" value="HOLI"/>
    <property type="match status" value="1"/>
</dbReference>
<dbReference type="SMART" id="SM00399">
    <property type="entry name" value="ZnF_C4"/>
    <property type="match status" value="1"/>
</dbReference>
<dbReference type="SUPFAM" id="SSF57716">
    <property type="entry name" value="Glucocorticoid receptor-like (DNA-binding domain)"/>
    <property type="match status" value="1"/>
</dbReference>
<dbReference type="SUPFAM" id="SSF48508">
    <property type="entry name" value="Nuclear receptor ligand-binding domain"/>
    <property type="match status" value="1"/>
</dbReference>
<dbReference type="PROSITE" id="PS51843">
    <property type="entry name" value="NR_LBD"/>
    <property type="match status" value="1"/>
</dbReference>
<dbReference type="PROSITE" id="PS00031">
    <property type="entry name" value="NUCLEAR_REC_DBD_1"/>
    <property type="match status" value="1"/>
</dbReference>
<dbReference type="PROSITE" id="PS51030">
    <property type="entry name" value="NUCLEAR_REC_DBD_2"/>
    <property type="match status" value="1"/>
</dbReference>
<accession>Q5E9B6</accession>
<feature type="chain" id="PRO_0000246174" description="Oxysterols receptor LXR-alpha">
    <location>
        <begin position="1"/>
        <end position="447"/>
    </location>
</feature>
<feature type="domain" description="NR LBD" evidence="4">
    <location>
        <begin position="209"/>
        <end position="447"/>
    </location>
</feature>
<feature type="DNA-binding region" description="Nuclear receptor" evidence="3">
    <location>
        <begin position="95"/>
        <end position="170"/>
    </location>
</feature>
<feature type="zinc finger region" description="NR C4-type" evidence="3">
    <location>
        <begin position="98"/>
        <end position="118"/>
    </location>
</feature>
<feature type="zinc finger region" description="NR C4-type" evidence="3">
    <location>
        <begin position="134"/>
        <end position="158"/>
    </location>
</feature>
<feature type="region of interest" description="Transactivation AF-1; required for ligand-independent transactivation function" evidence="1">
    <location>
        <begin position="1"/>
        <end position="96"/>
    </location>
</feature>
<feature type="region of interest" description="Disordered" evidence="5">
    <location>
        <begin position="1"/>
        <end position="88"/>
    </location>
</feature>
<feature type="region of interest" description="Disordered" evidence="5">
    <location>
        <begin position="178"/>
        <end position="203"/>
    </location>
</feature>
<feature type="region of interest" description="Transactivation AF-2; required for ligand-dependent transactivation function; mediates interaction with CCAR2" evidence="1">
    <location>
        <begin position="205"/>
        <end position="447"/>
    </location>
</feature>
<feature type="compositionally biased region" description="Low complexity" evidence="5">
    <location>
        <begin position="187"/>
        <end position="203"/>
    </location>
</feature>
<organism>
    <name type="scientific">Bos taurus</name>
    <name type="common">Bovine</name>
    <dbReference type="NCBI Taxonomy" id="9913"/>
    <lineage>
        <taxon>Eukaryota</taxon>
        <taxon>Metazoa</taxon>
        <taxon>Chordata</taxon>
        <taxon>Craniata</taxon>
        <taxon>Vertebrata</taxon>
        <taxon>Euteleostomi</taxon>
        <taxon>Mammalia</taxon>
        <taxon>Eutheria</taxon>
        <taxon>Laurasiatheria</taxon>
        <taxon>Artiodactyla</taxon>
        <taxon>Ruminantia</taxon>
        <taxon>Pecora</taxon>
        <taxon>Bovidae</taxon>
        <taxon>Bovinae</taxon>
        <taxon>Bos</taxon>
    </lineage>
</organism>
<protein>
    <recommendedName>
        <fullName>Oxysterols receptor LXR-alpha</fullName>
    </recommendedName>
    <alternativeName>
        <fullName>Liver X receptor alpha</fullName>
    </alternativeName>
    <alternativeName>
        <fullName>Nuclear receptor subfamily 1 group H member 3</fullName>
    </alternativeName>
</protein>
<keyword id="KW-0010">Activator</keyword>
<keyword id="KW-0963">Cytoplasm</keyword>
<keyword id="KW-0238">DNA-binding</keyword>
<keyword id="KW-0479">Metal-binding</keyword>
<keyword id="KW-0539">Nucleus</keyword>
<keyword id="KW-0675">Receptor</keyword>
<keyword id="KW-1185">Reference proteome</keyword>
<keyword id="KW-0804">Transcription</keyword>
<keyword id="KW-0805">Transcription regulation</keyword>
<keyword id="KW-0832">Ubl conjugation</keyword>
<keyword id="KW-0862">Zinc</keyword>
<keyword id="KW-0863">Zinc-finger</keyword>
<proteinExistence type="evidence at transcript level"/>
<comment type="function">
    <text evidence="1 2">Nuclear receptor that exhibits a ligand-dependent transcriptional activation activity. Interaction with retinoic acid receptor (RXR) shifts RXR from its role as a silent DNA-binding partner to an active ligand-binding subunit in mediating retinoid responses through target genes defined by LXRES. LXRES are DR4-type response elements characterized by direct repeats of two similar hexanuclotide half-sites spaced by four nucleotides. Plays an important role in the regulation of cholesterol homeostasis, regulating cholesterol uptake through MYLIP-dependent ubiquitination of LDLR, VLDLR and LRP8. Interplays functionally with RORA for the regulation of genes involved in liver metabolism (By similarity). Induces LPCAT3-dependent phospholipid remodeling in endoplasmic reticulum (ER) membranes of hepatocytes, driving SREBF1 processing and lipogenesis (By similarity). Via LPCAT3, triggers the incorporation of arachidonate into phosphatidylcholines of ER membranes, increasing membrane dynamics and enabling triacylglycerols transfer to nascent very low-density lipoprotein (VLDL) particles (By similarity). Via LPCAT3 also counteracts lipid-induced ER stress response and inflammation, likely by modulating SRC kinase membrane compartmentalization and limiting the synthesis of lipid inflammatory mediators (By similarity).</text>
</comment>
<comment type="subunit">
    <text evidence="1">Heterodimer of NR1H3 and RXR (retinoic acid receptor). Interacts with CCAR2 (via N-terminus) in a ligand-independent manner. Interacts with SIRT1 and this interaction is inhibited by CCAR2.</text>
</comment>
<comment type="subcellular location">
    <subcellularLocation>
        <location evidence="2 3">Nucleus</location>
    </subcellularLocation>
    <subcellularLocation>
        <location evidence="2">Cytoplasm</location>
    </subcellularLocation>
</comment>
<comment type="PTM">
    <text evidence="1">Ubiquitinated by UBR5, leading to its degradation: UBR5 specifically recognizes and binds ligand-bound NR1H3 when it is not associated with coactivators (NCOAs). In presence of NCOAs, the UBR5-degron is not accessible, preventing its ubiquitination and degradation.</text>
</comment>
<comment type="similarity">
    <text evidence="6">Belongs to the nuclear hormone receptor family. NR1 subfamily.</text>
</comment>
<sequence>MSLWLEAPVPDVSPDSAVELWEPDAQDASSQPLGSSKCILREESSTPQSAGDTSRMGLEAPEPTALLPGVEAPPESTELRPQKRKKGPAPKMLGNELCSVCGDKASGFHYNVLSCEGCKGFFRRSVIKGARYVCHSGGHCPMDTYMRRKCQECRLRKCRQAGMREECVLSEEQIRLKKMKRQEEEQAQATSAPPRASSPPQVLPQLSPEQLGMIEKLVAAQQLCNRRSFSDQLRVTPWPMAPDPQSREARQQRFAHFTELAIVSVQEIVDFAKQLPGFLQLSREDQIALLKTSAIEVMLLETSRRYNPGSESITFLKDFSYNREDFAKAGLQVEFINPIFEFSRAMNELQLNDAEFALLIAISIFSADRPNVQDQLQVERLQHTYVEALHAYVSIHHPHDRLMFPRMLMKLVSLRTLSSVHSEQVFALRLQDKKLPPLLSEIWDVHE</sequence>
<gene>
    <name type="primary">NR1H3</name>
    <name type="synonym">LXRA</name>
</gene>
<name>NR1H3_BOVIN</name>